<feature type="chain" id="PRO_0000093069" description="UvrABC system protein A">
    <location>
        <begin position="1"/>
        <end position="969"/>
    </location>
</feature>
<feature type="domain" description="ABC transporter 1" evidence="1">
    <location>
        <begin position="316"/>
        <end position="599"/>
    </location>
</feature>
<feature type="domain" description="ABC transporter 2" evidence="1">
    <location>
        <begin position="619"/>
        <end position="948"/>
    </location>
</feature>
<feature type="zinc finger region" description="C4-type" evidence="1">
    <location>
        <begin position="258"/>
        <end position="286"/>
    </location>
</feature>
<feature type="zinc finger region" description="C4-type" evidence="1">
    <location>
        <begin position="751"/>
        <end position="777"/>
    </location>
</feature>
<feature type="binding site" evidence="1">
    <location>
        <begin position="32"/>
        <end position="39"/>
    </location>
    <ligand>
        <name>ATP</name>
        <dbReference type="ChEBI" id="CHEBI:30616"/>
    </ligand>
</feature>
<feature type="binding site" evidence="1">
    <location>
        <begin position="652"/>
        <end position="659"/>
    </location>
    <ligand>
        <name>ATP</name>
        <dbReference type="ChEBI" id="CHEBI:30616"/>
    </ligand>
</feature>
<comment type="function">
    <text evidence="1">The UvrABC repair system catalyzes the recognition and processing of DNA lesions. UvrA is an ATPase and a DNA-binding protein. A damage recognition complex composed of 2 UvrA and 2 UvrB subunits scans DNA for abnormalities. When the presence of a lesion has been verified by UvrB, the UvrA molecules dissociate.</text>
</comment>
<comment type="subunit">
    <text evidence="1">Forms a heterotetramer with UvrB during the search for lesions.</text>
</comment>
<comment type="subcellular location">
    <subcellularLocation>
        <location evidence="1">Cytoplasm</location>
    </subcellularLocation>
</comment>
<comment type="similarity">
    <text evidence="1">Belongs to the ABC transporter superfamily. UvrA family.</text>
</comment>
<proteinExistence type="inferred from homology"/>
<accession>Q9CC24</accession>
<name>UVRA_MYCLE</name>
<reference key="1">
    <citation type="journal article" date="2001" name="Nature">
        <title>Massive gene decay in the leprosy bacillus.</title>
        <authorList>
            <person name="Cole S.T."/>
            <person name="Eiglmeier K."/>
            <person name="Parkhill J."/>
            <person name="James K.D."/>
            <person name="Thomson N.R."/>
            <person name="Wheeler P.R."/>
            <person name="Honore N."/>
            <person name="Garnier T."/>
            <person name="Churcher C.M."/>
            <person name="Harris D.E."/>
            <person name="Mungall K.L."/>
            <person name="Basham D."/>
            <person name="Brown D."/>
            <person name="Chillingworth T."/>
            <person name="Connor R."/>
            <person name="Davies R.M."/>
            <person name="Devlin K."/>
            <person name="Duthoy S."/>
            <person name="Feltwell T."/>
            <person name="Fraser A."/>
            <person name="Hamlin N."/>
            <person name="Holroyd S."/>
            <person name="Hornsby T."/>
            <person name="Jagels K."/>
            <person name="Lacroix C."/>
            <person name="Maclean J."/>
            <person name="Moule S."/>
            <person name="Murphy L.D."/>
            <person name="Oliver K."/>
            <person name="Quail M.A."/>
            <person name="Rajandream M.A."/>
            <person name="Rutherford K.M."/>
            <person name="Rutter S."/>
            <person name="Seeger K."/>
            <person name="Simon S."/>
            <person name="Simmonds M."/>
            <person name="Skelton J."/>
            <person name="Squares R."/>
            <person name="Squares S."/>
            <person name="Stevens K."/>
            <person name="Taylor K."/>
            <person name="Whitehead S."/>
            <person name="Woodward J.R."/>
            <person name="Barrell B.G."/>
        </authorList>
    </citation>
    <scope>NUCLEOTIDE SEQUENCE [LARGE SCALE GENOMIC DNA]</scope>
    <source>
        <strain>TN</strain>
    </source>
</reference>
<dbReference type="EMBL" id="AL583921">
    <property type="protein sequence ID" value="CAC31773.1"/>
    <property type="molecule type" value="Genomic_DNA"/>
</dbReference>
<dbReference type="PIR" id="B87083">
    <property type="entry name" value="B87083"/>
</dbReference>
<dbReference type="RefSeq" id="NP_301990.1">
    <property type="nucleotide sequence ID" value="NC_002677.1"/>
</dbReference>
<dbReference type="RefSeq" id="WP_010908311.1">
    <property type="nucleotide sequence ID" value="NC_002677.1"/>
</dbReference>
<dbReference type="SMR" id="Q9CC24"/>
<dbReference type="STRING" id="272631.gene:17575231"/>
<dbReference type="KEGG" id="mle:ML1392"/>
<dbReference type="PATRIC" id="fig|272631.5.peg.2590"/>
<dbReference type="Leproma" id="ML1392"/>
<dbReference type="eggNOG" id="COG0178">
    <property type="taxonomic scope" value="Bacteria"/>
</dbReference>
<dbReference type="HOGENOM" id="CLU_001370_0_2_11"/>
<dbReference type="OrthoDB" id="9809851at2"/>
<dbReference type="Proteomes" id="UP000000806">
    <property type="component" value="Chromosome"/>
</dbReference>
<dbReference type="GO" id="GO:0005737">
    <property type="term" value="C:cytoplasm"/>
    <property type="evidence" value="ECO:0007669"/>
    <property type="project" value="UniProtKB-SubCell"/>
</dbReference>
<dbReference type="GO" id="GO:0009380">
    <property type="term" value="C:excinuclease repair complex"/>
    <property type="evidence" value="ECO:0007669"/>
    <property type="project" value="InterPro"/>
</dbReference>
<dbReference type="GO" id="GO:0005524">
    <property type="term" value="F:ATP binding"/>
    <property type="evidence" value="ECO:0007669"/>
    <property type="project" value="UniProtKB-UniRule"/>
</dbReference>
<dbReference type="GO" id="GO:0016887">
    <property type="term" value="F:ATP hydrolysis activity"/>
    <property type="evidence" value="ECO:0007669"/>
    <property type="project" value="InterPro"/>
</dbReference>
<dbReference type="GO" id="GO:0003677">
    <property type="term" value="F:DNA binding"/>
    <property type="evidence" value="ECO:0007669"/>
    <property type="project" value="UniProtKB-UniRule"/>
</dbReference>
<dbReference type="GO" id="GO:0009381">
    <property type="term" value="F:excinuclease ABC activity"/>
    <property type="evidence" value="ECO:0007669"/>
    <property type="project" value="UniProtKB-UniRule"/>
</dbReference>
<dbReference type="GO" id="GO:0008270">
    <property type="term" value="F:zinc ion binding"/>
    <property type="evidence" value="ECO:0007669"/>
    <property type="project" value="UniProtKB-UniRule"/>
</dbReference>
<dbReference type="GO" id="GO:0006289">
    <property type="term" value="P:nucleotide-excision repair"/>
    <property type="evidence" value="ECO:0007669"/>
    <property type="project" value="UniProtKB-UniRule"/>
</dbReference>
<dbReference type="GO" id="GO:0009432">
    <property type="term" value="P:SOS response"/>
    <property type="evidence" value="ECO:0007669"/>
    <property type="project" value="UniProtKB-UniRule"/>
</dbReference>
<dbReference type="CDD" id="cd03270">
    <property type="entry name" value="ABC_UvrA_I"/>
    <property type="match status" value="1"/>
</dbReference>
<dbReference type="CDD" id="cd03271">
    <property type="entry name" value="ABC_UvrA_II"/>
    <property type="match status" value="1"/>
</dbReference>
<dbReference type="FunFam" id="1.10.8.280:FF:000002">
    <property type="entry name" value="UvrABC system protein A"/>
    <property type="match status" value="1"/>
</dbReference>
<dbReference type="FunFam" id="1.20.1580.10:FF:000001">
    <property type="entry name" value="UvrABC system protein A"/>
    <property type="match status" value="2"/>
</dbReference>
<dbReference type="FunFam" id="1.20.1580.10:FF:000002">
    <property type="entry name" value="UvrABC system protein A"/>
    <property type="match status" value="1"/>
</dbReference>
<dbReference type="Gene3D" id="1.10.8.280">
    <property type="entry name" value="ABC transporter ATPase domain-like"/>
    <property type="match status" value="1"/>
</dbReference>
<dbReference type="Gene3D" id="1.20.1580.10">
    <property type="entry name" value="ABC transporter ATPase like domain"/>
    <property type="match status" value="2"/>
</dbReference>
<dbReference type="Gene3D" id="3.30.1490.20">
    <property type="entry name" value="ATP-grasp fold, A domain"/>
    <property type="match status" value="1"/>
</dbReference>
<dbReference type="Gene3D" id="3.40.50.300">
    <property type="entry name" value="P-loop containing nucleotide triphosphate hydrolases"/>
    <property type="match status" value="2"/>
</dbReference>
<dbReference type="HAMAP" id="MF_00205">
    <property type="entry name" value="UvrA"/>
    <property type="match status" value="1"/>
</dbReference>
<dbReference type="InterPro" id="IPR003439">
    <property type="entry name" value="ABC_transporter-like_ATP-bd"/>
</dbReference>
<dbReference type="InterPro" id="IPR017871">
    <property type="entry name" value="ABC_transporter-like_CS"/>
</dbReference>
<dbReference type="InterPro" id="IPR013815">
    <property type="entry name" value="ATP_grasp_subdomain_1"/>
</dbReference>
<dbReference type="InterPro" id="IPR027417">
    <property type="entry name" value="P-loop_NTPase"/>
</dbReference>
<dbReference type="InterPro" id="IPR004602">
    <property type="entry name" value="UvrA"/>
</dbReference>
<dbReference type="InterPro" id="IPR041552">
    <property type="entry name" value="UvrA_DNA-bd"/>
</dbReference>
<dbReference type="InterPro" id="IPR041102">
    <property type="entry name" value="UvrA_inter"/>
</dbReference>
<dbReference type="NCBIfam" id="NF001503">
    <property type="entry name" value="PRK00349.1"/>
    <property type="match status" value="1"/>
</dbReference>
<dbReference type="NCBIfam" id="TIGR00630">
    <property type="entry name" value="uvra"/>
    <property type="match status" value="1"/>
</dbReference>
<dbReference type="PANTHER" id="PTHR43152">
    <property type="entry name" value="UVRABC SYSTEM PROTEIN A"/>
    <property type="match status" value="1"/>
</dbReference>
<dbReference type="PANTHER" id="PTHR43152:SF3">
    <property type="entry name" value="UVRABC SYSTEM PROTEIN A"/>
    <property type="match status" value="1"/>
</dbReference>
<dbReference type="Pfam" id="PF17755">
    <property type="entry name" value="UvrA_DNA-bind"/>
    <property type="match status" value="1"/>
</dbReference>
<dbReference type="Pfam" id="PF17760">
    <property type="entry name" value="UvrA_inter"/>
    <property type="match status" value="1"/>
</dbReference>
<dbReference type="SUPFAM" id="SSF52540">
    <property type="entry name" value="P-loop containing nucleoside triphosphate hydrolases"/>
    <property type="match status" value="2"/>
</dbReference>
<dbReference type="PROSITE" id="PS00211">
    <property type="entry name" value="ABC_TRANSPORTER_1"/>
    <property type="match status" value="2"/>
</dbReference>
<dbReference type="PROSITE" id="PS50893">
    <property type="entry name" value="ABC_TRANSPORTER_2"/>
    <property type="match status" value="1"/>
</dbReference>
<keyword id="KW-0067">ATP-binding</keyword>
<keyword id="KW-0963">Cytoplasm</keyword>
<keyword id="KW-0227">DNA damage</keyword>
<keyword id="KW-0228">DNA excision</keyword>
<keyword id="KW-0234">DNA repair</keyword>
<keyword id="KW-0238">DNA-binding</keyword>
<keyword id="KW-0267">Excision nuclease</keyword>
<keyword id="KW-0479">Metal-binding</keyword>
<keyword id="KW-0547">Nucleotide-binding</keyword>
<keyword id="KW-1185">Reference proteome</keyword>
<keyword id="KW-0677">Repeat</keyword>
<keyword id="KW-0742">SOS response</keyword>
<keyword id="KW-0862">Zinc</keyword>
<keyword id="KW-0863">Zinc-finger</keyword>
<evidence type="ECO:0000255" key="1">
    <source>
        <dbReference type="HAMAP-Rule" id="MF_00205"/>
    </source>
</evidence>
<sequence length="969" mass="106378">MADRLIVKGAREHNLRSVDLDLPRDSLIVFTGLSGSGKSSLAFDTIFAEGQRRYVESLSAYARQFLGQMDKPDVDFIEGLSPAVSIDQKSTNRNPRSTVGTITEVYDYLRLLYARAGTPHCPICGEQISRQTPQQIVDQVLVLPEGTRFLVLAPVVRTRKGEFADLFDKLNAQGYSRVRVDDVVYPLSDPPKLKKQEKHDIEVVVDRLTVKIAAKQRLTDSVETALNLADGIVVLEFPDDHDERGHPREQCFSEKLACPNGHPLAVDDLEPRSFSFNSPYGACPECVGLGIRKEIDSDLVVPDPDRTLAEGAVAPWSAGRTAEYFTRMMAGLGEKLGFDVDTPWRKLPAKARKAILEGSDHQVHVQYHNRYGRPRSYYVDFEGVLTFLQRKMEQTESEQMKERYEGFMRNIPCPVCQGTRLKPEILAVTLAAGERGAKSIAEVCELSIADCSAFLNALILGVREQAIAGQVLKEIQSRLGFLLDVGLEYLSLSRAAATLSGGEAQRIRLATQIGSGLVGVLYVLDEPSIGLHQRDNRRLIETLTRLRALGNTLIVVEHDEDTIAHADWVVDIGPGAGEHGGQIVHNGTYRELLANKDSITGAYLSGRESIATPTRRRSVDRKRELTVVGAREHNLRGIDVSFPLGVLTSVTGVSGSGKSTLVNDILAAVLANRLNGARQVPGRHTRVTGLEHLDKLVRVDQSPIGRTPRSNPATYTGVFDKIRILFAATTEAKVRGYQPGRFSFNVKGGRCEACTGDGTIKIEMNFLPDVYVPCEVCQGARYNRETLEVHYKGKAISEVLDMSIEEAAEFFEPIIGINRYLRTLVDVGLGYVRLGQPAPTLSGGEAQRVKLASELQKRSTGRTIYILDEPTTGLHFDDIRKLLNVINGLVDKDNTVIVIEHNLDVIKTSDWIVDMGPEGGAQGGTVVAEGTPEDVAAVPESYTGKFLAEVVGAGCAPARTPRRRRTVTA</sequence>
<gene>
    <name evidence="1" type="primary">uvrA</name>
    <name type="ordered locus">ML1392</name>
</gene>
<organism>
    <name type="scientific">Mycobacterium leprae (strain TN)</name>
    <dbReference type="NCBI Taxonomy" id="272631"/>
    <lineage>
        <taxon>Bacteria</taxon>
        <taxon>Bacillati</taxon>
        <taxon>Actinomycetota</taxon>
        <taxon>Actinomycetes</taxon>
        <taxon>Mycobacteriales</taxon>
        <taxon>Mycobacteriaceae</taxon>
        <taxon>Mycobacterium</taxon>
    </lineage>
</organism>
<protein>
    <recommendedName>
        <fullName evidence="1">UvrABC system protein A</fullName>
        <shortName evidence="1">UvrA protein</shortName>
    </recommendedName>
    <alternativeName>
        <fullName evidence="1">Excinuclease ABC subunit A</fullName>
    </alternativeName>
</protein>